<gene>
    <name evidence="3" type="primary">mscL</name>
</gene>
<protein>
    <recommendedName>
        <fullName evidence="3">Large-conductance mechanosensitive channel</fullName>
    </recommendedName>
</protein>
<sequence>MGLLSEFKAFAVKGNVVDMAVGIIIGAAFGKIVSSFVGDVIMPPIGLLIGGVDFSDLAITLKAEGDVPAVVLAYRKFIQTVLNFVIVAFAIFMGVKAINRLKREEAVAPSEPPVPSAEETLLTEIRDLLKAQQNKS</sequence>
<organism>
    <name type="scientific">Pseudomonas fluorescens</name>
    <dbReference type="NCBI Taxonomy" id="294"/>
    <lineage>
        <taxon>Bacteria</taxon>
        <taxon>Pseudomonadati</taxon>
        <taxon>Pseudomonadota</taxon>
        <taxon>Gammaproteobacteria</taxon>
        <taxon>Pseudomonadales</taxon>
        <taxon>Pseudomonadaceae</taxon>
        <taxon>Pseudomonas</taxon>
    </lineage>
</organism>
<name>MSCL_PSEFL</name>
<feature type="chain" id="PRO_0000192455" description="Large-conductance mechanosensitive channel">
    <location>
        <begin position="1"/>
        <end position="136"/>
    </location>
</feature>
<feature type="topological domain" description="Cytoplasmic" evidence="2">
    <location>
        <begin position="1"/>
        <end position="16"/>
    </location>
</feature>
<feature type="transmembrane region" description="Helical" evidence="2">
    <location>
        <begin position="17"/>
        <end position="45"/>
    </location>
</feature>
<feature type="topological domain" description="Extracellular" evidence="2">
    <location>
        <begin position="46"/>
        <end position="73"/>
    </location>
</feature>
<feature type="transmembrane region" description="Helical" evidence="2">
    <location>
        <begin position="74"/>
        <end position="93"/>
    </location>
</feature>
<feature type="topological domain" description="Cytoplasmic" evidence="2">
    <location>
        <begin position="94"/>
        <end position="136"/>
    </location>
</feature>
<accession>O68286</accession>
<keyword id="KW-0997">Cell inner membrane</keyword>
<keyword id="KW-1003">Cell membrane</keyword>
<keyword id="KW-0407">Ion channel</keyword>
<keyword id="KW-0406">Ion transport</keyword>
<keyword id="KW-0472">Membrane</keyword>
<keyword id="KW-0812">Transmembrane</keyword>
<keyword id="KW-1133">Transmembrane helix</keyword>
<keyword id="KW-0813">Transport</keyword>
<dbReference type="EMBL" id="AF029732">
    <property type="protein sequence ID" value="AAC38561.1"/>
    <property type="molecule type" value="Genomic_DNA"/>
</dbReference>
<dbReference type="SMR" id="O68286"/>
<dbReference type="GO" id="GO:0005886">
    <property type="term" value="C:plasma membrane"/>
    <property type="evidence" value="ECO:0007669"/>
    <property type="project" value="UniProtKB-SubCell"/>
</dbReference>
<dbReference type="GO" id="GO:0008381">
    <property type="term" value="F:mechanosensitive monoatomic ion channel activity"/>
    <property type="evidence" value="ECO:0007669"/>
    <property type="project" value="UniProtKB-UniRule"/>
</dbReference>
<dbReference type="FunFam" id="1.10.1200.120:FF:000001">
    <property type="entry name" value="Large-conductance mechanosensitive channel"/>
    <property type="match status" value="1"/>
</dbReference>
<dbReference type="Gene3D" id="1.10.1200.120">
    <property type="entry name" value="Large-conductance mechanosensitive channel, MscL, domain 1"/>
    <property type="match status" value="1"/>
</dbReference>
<dbReference type="HAMAP" id="MF_00115">
    <property type="entry name" value="MscL"/>
    <property type="match status" value="1"/>
</dbReference>
<dbReference type="InterPro" id="IPR019823">
    <property type="entry name" value="Mechanosensitive_channel_CS"/>
</dbReference>
<dbReference type="InterPro" id="IPR001185">
    <property type="entry name" value="MS_channel"/>
</dbReference>
<dbReference type="InterPro" id="IPR037673">
    <property type="entry name" value="MSC/AndL"/>
</dbReference>
<dbReference type="InterPro" id="IPR036019">
    <property type="entry name" value="MscL_channel"/>
</dbReference>
<dbReference type="NCBIfam" id="TIGR00220">
    <property type="entry name" value="mscL"/>
    <property type="match status" value="1"/>
</dbReference>
<dbReference type="NCBIfam" id="NF001843">
    <property type="entry name" value="PRK00567.1-4"/>
    <property type="match status" value="1"/>
</dbReference>
<dbReference type="PANTHER" id="PTHR30266:SF2">
    <property type="entry name" value="LARGE-CONDUCTANCE MECHANOSENSITIVE CHANNEL"/>
    <property type="match status" value="1"/>
</dbReference>
<dbReference type="PANTHER" id="PTHR30266">
    <property type="entry name" value="MECHANOSENSITIVE CHANNEL MSCL"/>
    <property type="match status" value="1"/>
</dbReference>
<dbReference type="Pfam" id="PF01741">
    <property type="entry name" value="MscL"/>
    <property type="match status" value="1"/>
</dbReference>
<dbReference type="PRINTS" id="PR01264">
    <property type="entry name" value="MECHCHANNEL"/>
</dbReference>
<dbReference type="SUPFAM" id="SSF81330">
    <property type="entry name" value="Gated mechanosensitive channel"/>
    <property type="match status" value="1"/>
</dbReference>
<dbReference type="PROSITE" id="PS01327">
    <property type="entry name" value="MSCL"/>
    <property type="match status" value="1"/>
</dbReference>
<comment type="function">
    <text evidence="4">Channel that opens in response to stretch forces in the membrane lipid bilayer. Forms a nonselective ion channel with a conductance of about 4 nanosiemens. May participate in the regulation of osmotic pressure changes within the cell.</text>
</comment>
<comment type="subunit">
    <text evidence="1 3">Homopentamer.</text>
</comment>
<comment type="subcellular location">
    <subcellularLocation>
        <location evidence="3 4">Cell inner membrane</location>
        <topology evidence="1 3">Multi-pass membrane protein</topology>
    </subcellularLocation>
</comment>
<comment type="similarity">
    <text evidence="3 5">Belongs to the MscL family.</text>
</comment>
<reference key="1">
    <citation type="journal article" date="1998" name="Mol. Microbiol.">
        <title>Functional and structural conservation in the mechanosensitive channel mscL implicates elements crucial for mechanosensation.</title>
        <authorList>
            <person name="Moe P.C."/>
            <person name="Blount P."/>
            <person name="Kung C."/>
        </authorList>
    </citation>
    <scope>NUCLEOTIDE SEQUENCE [GENOMIC DNA]</scope>
    <scope>FUNCTION</scope>
    <scope>SUBCELLULAR LOCATION</scope>
</reference>
<proteinExistence type="inferred from homology"/>
<evidence type="ECO:0000250" key="1">
    <source>
        <dbReference type="UniProtKB" id="P0A742"/>
    </source>
</evidence>
<evidence type="ECO:0000250" key="2">
    <source>
        <dbReference type="UniProtKB" id="P9WJN5"/>
    </source>
</evidence>
<evidence type="ECO:0000255" key="3">
    <source>
        <dbReference type="HAMAP-Rule" id="MF_00115"/>
    </source>
</evidence>
<evidence type="ECO:0000269" key="4">
    <source>
    </source>
</evidence>
<evidence type="ECO:0000305" key="5"/>